<gene>
    <name evidence="1" type="primary">rplN</name>
    <name type="ordered locus">HCH_06207</name>
</gene>
<evidence type="ECO:0000255" key="1">
    <source>
        <dbReference type="HAMAP-Rule" id="MF_01367"/>
    </source>
</evidence>
<evidence type="ECO:0000305" key="2"/>
<organism>
    <name type="scientific">Hahella chejuensis (strain KCTC 2396)</name>
    <dbReference type="NCBI Taxonomy" id="349521"/>
    <lineage>
        <taxon>Bacteria</taxon>
        <taxon>Pseudomonadati</taxon>
        <taxon>Pseudomonadota</taxon>
        <taxon>Gammaproteobacteria</taxon>
        <taxon>Oceanospirillales</taxon>
        <taxon>Hahellaceae</taxon>
        <taxon>Hahella</taxon>
    </lineage>
</organism>
<feature type="chain" id="PRO_0000266495" description="Large ribosomal subunit protein uL14">
    <location>
        <begin position="1"/>
        <end position="122"/>
    </location>
</feature>
<name>RL14_HAHCH</name>
<comment type="function">
    <text evidence="1">Binds to 23S rRNA. Forms part of two intersubunit bridges in the 70S ribosome.</text>
</comment>
<comment type="subunit">
    <text evidence="1">Part of the 50S ribosomal subunit. Forms a cluster with proteins L3 and L19. In the 70S ribosome, L14 and L19 interact and together make contacts with the 16S rRNA in bridges B5 and B8.</text>
</comment>
<comment type="similarity">
    <text evidence="1">Belongs to the universal ribosomal protein uL14 family.</text>
</comment>
<sequence length="122" mass="13421">MIQTQTVLDVADNSGARRVMCIKVLGGSHRRYASIGDVIKVSVKEAIPRGKVKKGQVLKAVVVRTRKGVRRQDGSLIRFDGNAAVLLNNQEQPIGTRIFGPVTRELRGEKFMKIISLAPEVL</sequence>
<accession>Q2S922</accession>
<reference key="1">
    <citation type="journal article" date="2005" name="Nucleic Acids Res.">
        <title>Genomic blueprint of Hahella chejuensis, a marine microbe producing an algicidal agent.</title>
        <authorList>
            <person name="Jeong H."/>
            <person name="Yim J.H."/>
            <person name="Lee C."/>
            <person name="Choi S.-H."/>
            <person name="Park Y.K."/>
            <person name="Yoon S.H."/>
            <person name="Hur C.-G."/>
            <person name="Kang H.-Y."/>
            <person name="Kim D."/>
            <person name="Lee H.H."/>
            <person name="Park K.H."/>
            <person name="Park S.-H."/>
            <person name="Park H.-S."/>
            <person name="Lee H.K."/>
            <person name="Oh T.K."/>
            <person name="Kim J.F."/>
        </authorList>
    </citation>
    <scope>NUCLEOTIDE SEQUENCE [LARGE SCALE GENOMIC DNA]</scope>
    <source>
        <strain>KCTC 2396</strain>
    </source>
</reference>
<protein>
    <recommendedName>
        <fullName evidence="1">Large ribosomal subunit protein uL14</fullName>
    </recommendedName>
    <alternativeName>
        <fullName evidence="2">50S ribosomal protein L14</fullName>
    </alternativeName>
</protein>
<keyword id="KW-1185">Reference proteome</keyword>
<keyword id="KW-0687">Ribonucleoprotein</keyword>
<keyword id="KW-0689">Ribosomal protein</keyword>
<keyword id="KW-0694">RNA-binding</keyword>
<keyword id="KW-0699">rRNA-binding</keyword>
<proteinExistence type="inferred from homology"/>
<dbReference type="EMBL" id="CP000155">
    <property type="protein sequence ID" value="ABC32852.1"/>
    <property type="molecule type" value="Genomic_DNA"/>
</dbReference>
<dbReference type="RefSeq" id="WP_011399910.1">
    <property type="nucleotide sequence ID" value="NC_007645.1"/>
</dbReference>
<dbReference type="SMR" id="Q2S922"/>
<dbReference type="STRING" id="349521.HCH_06207"/>
<dbReference type="KEGG" id="hch:HCH_06207"/>
<dbReference type="eggNOG" id="COG0093">
    <property type="taxonomic scope" value="Bacteria"/>
</dbReference>
<dbReference type="HOGENOM" id="CLU_095071_2_1_6"/>
<dbReference type="OrthoDB" id="9806379at2"/>
<dbReference type="Proteomes" id="UP000000238">
    <property type="component" value="Chromosome"/>
</dbReference>
<dbReference type="GO" id="GO:0022625">
    <property type="term" value="C:cytosolic large ribosomal subunit"/>
    <property type="evidence" value="ECO:0007669"/>
    <property type="project" value="TreeGrafter"/>
</dbReference>
<dbReference type="GO" id="GO:0070180">
    <property type="term" value="F:large ribosomal subunit rRNA binding"/>
    <property type="evidence" value="ECO:0007669"/>
    <property type="project" value="TreeGrafter"/>
</dbReference>
<dbReference type="GO" id="GO:0003735">
    <property type="term" value="F:structural constituent of ribosome"/>
    <property type="evidence" value="ECO:0007669"/>
    <property type="project" value="InterPro"/>
</dbReference>
<dbReference type="GO" id="GO:0006412">
    <property type="term" value="P:translation"/>
    <property type="evidence" value="ECO:0007669"/>
    <property type="project" value="UniProtKB-UniRule"/>
</dbReference>
<dbReference type="CDD" id="cd00337">
    <property type="entry name" value="Ribosomal_uL14"/>
    <property type="match status" value="1"/>
</dbReference>
<dbReference type="FunFam" id="2.40.150.20:FF:000001">
    <property type="entry name" value="50S ribosomal protein L14"/>
    <property type="match status" value="1"/>
</dbReference>
<dbReference type="Gene3D" id="2.40.150.20">
    <property type="entry name" value="Ribosomal protein L14"/>
    <property type="match status" value="1"/>
</dbReference>
<dbReference type="HAMAP" id="MF_01367">
    <property type="entry name" value="Ribosomal_uL14"/>
    <property type="match status" value="1"/>
</dbReference>
<dbReference type="InterPro" id="IPR000218">
    <property type="entry name" value="Ribosomal_uL14"/>
</dbReference>
<dbReference type="InterPro" id="IPR005745">
    <property type="entry name" value="Ribosomal_uL14_bac-type"/>
</dbReference>
<dbReference type="InterPro" id="IPR019972">
    <property type="entry name" value="Ribosomal_uL14_CS"/>
</dbReference>
<dbReference type="InterPro" id="IPR036853">
    <property type="entry name" value="Ribosomal_uL14_sf"/>
</dbReference>
<dbReference type="NCBIfam" id="TIGR01067">
    <property type="entry name" value="rplN_bact"/>
    <property type="match status" value="1"/>
</dbReference>
<dbReference type="PANTHER" id="PTHR11761">
    <property type="entry name" value="50S/60S RIBOSOMAL PROTEIN L14/L23"/>
    <property type="match status" value="1"/>
</dbReference>
<dbReference type="PANTHER" id="PTHR11761:SF3">
    <property type="entry name" value="LARGE RIBOSOMAL SUBUNIT PROTEIN UL14M"/>
    <property type="match status" value="1"/>
</dbReference>
<dbReference type="Pfam" id="PF00238">
    <property type="entry name" value="Ribosomal_L14"/>
    <property type="match status" value="1"/>
</dbReference>
<dbReference type="SMART" id="SM01374">
    <property type="entry name" value="Ribosomal_L14"/>
    <property type="match status" value="1"/>
</dbReference>
<dbReference type="SUPFAM" id="SSF50193">
    <property type="entry name" value="Ribosomal protein L14"/>
    <property type="match status" value="1"/>
</dbReference>
<dbReference type="PROSITE" id="PS00049">
    <property type="entry name" value="RIBOSOMAL_L14"/>
    <property type="match status" value="1"/>
</dbReference>